<protein>
    <recommendedName>
        <fullName>14-3-3-like protein</fullName>
    </recommendedName>
</protein>
<feature type="chain" id="PRO_0000058697" description="14-3-3-like protein">
    <location>
        <begin position="1"/>
        <end position="260"/>
    </location>
</feature>
<name>1433_PEA</name>
<proteinExistence type="evidence at transcript level"/>
<organism>
    <name type="scientific">Pisum sativum</name>
    <name type="common">Garden pea</name>
    <name type="synonym">Lathyrus oleraceus</name>
    <dbReference type="NCBI Taxonomy" id="3888"/>
    <lineage>
        <taxon>Eukaryota</taxon>
        <taxon>Viridiplantae</taxon>
        <taxon>Streptophyta</taxon>
        <taxon>Embryophyta</taxon>
        <taxon>Tracheophyta</taxon>
        <taxon>Spermatophyta</taxon>
        <taxon>Magnoliopsida</taxon>
        <taxon>eudicotyledons</taxon>
        <taxon>Gunneridae</taxon>
        <taxon>Pentapetalae</taxon>
        <taxon>rosids</taxon>
        <taxon>fabids</taxon>
        <taxon>Fabales</taxon>
        <taxon>Fabaceae</taxon>
        <taxon>Papilionoideae</taxon>
        <taxon>50 kb inversion clade</taxon>
        <taxon>NPAAA clade</taxon>
        <taxon>Hologalegina</taxon>
        <taxon>IRL clade</taxon>
        <taxon>Fabeae</taxon>
        <taxon>Pisum</taxon>
    </lineage>
</organism>
<reference key="1">
    <citation type="journal article" date="1995" name="Plant Physiol.">
        <title>Isolation, sequencing, and analysis of a 14-3-3 brain protein homolog from pea (Pisum sativum L.).</title>
        <authorList>
            <person name="Stankovic B."/>
            <person name="Garic-Stankovic A."/>
            <person name="Smith C.M."/>
            <person name="Davies E."/>
        </authorList>
    </citation>
    <scope>NUCLEOTIDE SEQUENCE [MRNA]</scope>
    <source>
        <strain>cv. Alaska</strain>
    </source>
</reference>
<sequence length="260" mass="29331">MAAAHTPREENVYMAKLAEQAERYEEMVEFMEKVSANADSEELTVEERNLLSVAYKNVIGARRASWRIISSIEQKEESRGNEDHVAVIRDYRSKIESELSNICDGILKLLDTRLIPSASSGDSKVFYLKMKGDYHRYLAEFKTGAERKEAAESTLTGYKSAQDIANAELPPTHPIRLGLALNFSVFYYEILNSPDRACNLAKQAFDEAIAELDTLGEESYKDSTLIMQLLRDNLTLWTSDMQDDGADEIKEAAPKADEQQ</sequence>
<comment type="similarity">
    <text evidence="1">Belongs to the 14-3-3 family.</text>
</comment>
<evidence type="ECO:0000305" key="1"/>
<dbReference type="EMBL" id="U15036">
    <property type="protein sequence ID" value="AAA85817.1"/>
    <property type="molecule type" value="mRNA"/>
</dbReference>
<dbReference type="SMR" id="P46266"/>
<dbReference type="IntAct" id="P46266">
    <property type="interactions" value="2"/>
</dbReference>
<dbReference type="MINT" id="P46266"/>
<dbReference type="FunFam" id="1.20.190.20:FF:000002">
    <property type="entry name" value="14-3-3 protein epsilon"/>
    <property type="match status" value="1"/>
</dbReference>
<dbReference type="Gene3D" id="1.20.190.20">
    <property type="entry name" value="14-3-3 domain"/>
    <property type="match status" value="1"/>
</dbReference>
<dbReference type="InterPro" id="IPR000308">
    <property type="entry name" value="14-3-3"/>
</dbReference>
<dbReference type="InterPro" id="IPR023409">
    <property type="entry name" value="14-3-3_CS"/>
</dbReference>
<dbReference type="InterPro" id="IPR036815">
    <property type="entry name" value="14-3-3_dom_sf"/>
</dbReference>
<dbReference type="InterPro" id="IPR023410">
    <property type="entry name" value="14-3-3_domain"/>
</dbReference>
<dbReference type="PANTHER" id="PTHR18860">
    <property type="entry name" value="14-3-3 PROTEIN"/>
    <property type="match status" value="1"/>
</dbReference>
<dbReference type="Pfam" id="PF00244">
    <property type="entry name" value="14-3-3"/>
    <property type="match status" value="1"/>
</dbReference>
<dbReference type="PIRSF" id="PIRSF000868">
    <property type="entry name" value="14-3-3"/>
    <property type="match status" value="1"/>
</dbReference>
<dbReference type="PRINTS" id="PR00305">
    <property type="entry name" value="1433ZETA"/>
</dbReference>
<dbReference type="SMART" id="SM00101">
    <property type="entry name" value="14_3_3"/>
    <property type="match status" value="1"/>
</dbReference>
<dbReference type="SUPFAM" id="SSF48445">
    <property type="entry name" value="14-3-3 protein"/>
    <property type="match status" value="1"/>
</dbReference>
<dbReference type="PROSITE" id="PS00796">
    <property type="entry name" value="1433_1"/>
    <property type="match status" value="1"/>
</dbReference>
<dbReference type="PROSITE" id="PS00797">
    <property type="entry name" value="1433_2"/>
    <property type="match status" value="1"/>
</dbReference>
<accession>P46266</accession>